<evidence type="ECO:0000255" key="1">
    <source>
        <dbReference type="HAMAP-Rule" id="MF_00220"/>
    </source>
</evidence>
<sequence length="430" mass="47394">MILIKNAQIINSLHDKVEKADILIVDDKIKKIGKDIEENPEKMTIIDASGKVVMPSFTDIHCHLREPGFEYKEDIKSGSRSAAAGGFTTICCMPNTNPPVDNRAMVAYIKYRAREVSPIEVLPVGAITKGLLGEELAEIGFMKEEGAIAISDDGKCVMNANLMKNALLYSRDFSIPVISHCEDTNLSEGGQINLGYVSTITGLRGIPREAESVIIARDILLAKETKSHLHITHVSTKESVRLIKMAKEWGVNVTADTCPHYISLTEEEVLGFNTNAKVNPPLRTQEDVEALIEGLKEGVIDCISTDHAPHHKDEKNVEFNLAASGTIGFETAFSVLFTYLVEKNGFDIGKIVELLNHNPRKIIGLSPNVLKEGEKANLVIVDLKKKWEVKEENIVSKSKNSVFLGKLLTSYVETVIYNGKILKKDGVLNC</sequence>
<reference key="1">
    <citation type="submission" date="2007-04" db="EMBL/GenBank/DDBJ databases">
        <title>Genome sequence of the thermophilic hydrogen-producing bacterium Caldicellulosiruptor saccharolyticus DSM 8903.</title>
        <authorList>
            <person name="Copeland A."/>
            <person name="Lucas S."/>
            <person name="Lapidus A."/>
            <person name="Barry K."/>
            <person name="Detter J.C."/>
            <person name="Glavina del Rio T."/>
            <person name="Hammon N."/>
            <person name="Israni S."/>
            <person name="Dalin E."/>
            <person name="Tice H."/>
            <person name="Pitluck S."/>
            <person name="Kiss H."/>
            <person name="Brettin T."/>
            <person name="Bruce D."/>
            <person name="Han C."/>
            <person name="Schmutz J."/>
            <person name="Larimer F."/>
            <person name="Land M."/>
            <person name="Hauser L."/>
            <person name="Kyrpides N."/>
            <person name="Lykidis A."/>
            <person name="van de Werken H.J.G."/>
            <person name="Verhaart M.R.A."/>
            <person name="VanFossen A.L."/>
            <person name="Lewis D.L."/>
            <person name="Nichols J.D."/>
            <person name="Goorissen H.P."/>
            <person name="van Niel E.W.J."/>
            <person name="Stams F.J.M."/>
            <person name="Willquist K.U."/>
            <person name="Ward D.E."/>
            <person name="van der Oost J."/>
            <person name="Kelly R.M."/>
            <person name="Kengen S.M.W."/>
            <person name="Richardson P."/>
        </authorList>
    </citation>
    <scope>NUCLEOTIDE SEQUENCE [LARGE SCALE GENOMIC DNA]</scope>
    <source>
        <strain>ATCC 43494 / DSM 8903 / Tp8T 6331</strain>
    </source>
</reference>
<accession>A4XKT2</accession>
<organism>
    <name type="scientific">Caldicellulosiruptor saccharolyticus (strain ATCC 43494 / DSM 8903 / Tp8T 6331)</name>
    <dbReference type="NCBI Taxonomy" id="351627"/>
    <lineage>
        <taxon>Bacteria</taxon>
        <taxon>Bacillati</taxon>
        <taxon>Bacillota</taxon>
        <taxon>Bacillota incertae sedis</taxon>
        <taxon>Caldicellulosiruptorales</taxon>
        <taxon>Caldicellulosiruptoraceae</taxon>
        <taxon>Caldicellulosiruptor</taxon>
    </lineage>
</organism>
<gene>
    <name evidence="1" type="primary">pyrC</name>
    <name type="ordered locus">Csac_1932</name>
</gene>
<proteinExistence type="inferred from homology"/>
<feature type="chain" id="PRO_0000325590" description="Dihydroorotase">
    <location>
        <begin position="1"/>
        <end position="430"/>
    </location>
</feature>
<feature type="active site" evidence="1">
    <location>
        <position position="306"/>
    </location>
</feature>
<feature type="binding site" evidence="1">
    <location>
        <position position="61"/>
    </location>
    <ligand>
        <name>Zn(2+)</name>
        <dbReference type="ChEBI" id="CHEBI:29105"/>
        <label>1</label>
    </ligand>
</feature>
<feature type="binding site" evidence="1">
    <location>
        <begin position="63"/>
        <end position="65"/>
    </location>
    <ligand>
        <name>substrate</name>
    </ligand>
</feature>
<feature type="binding site" evidence="1">
    <location>
        <position position="63"/>
    </location>
    <ligand>
        <name>Zn(2+)</name>
        <dbReference type="ChEBI" id="CHEBI:29105"/>
        <label>1</label>
    </ligand>
</feature>
<feature type="binding site" evidence="1">
    <location>
        <position position="95"/>
    </location>
    <ligand>
        <name>substrate</name>
    </ligand>
</feature>
<feature type="binding site" evidence="1">
    <location>
        <position position="153"/>
    </location>
    <ligand>
        <name>Zn(2+)</name>
        <dbReference type="ChEBI" id="CHEBI:29105"/>
        <label>1</label>
    </ligand>
</feature>
<feature type="binding site" evidence="1">
    <location>
        <position position="153"/>
    </location>
    <ligand>
        <name>Zn(2+)</name>
        <dbReference type="ChEBI" id="CHEBI:29105"/>
        <label>2</label>
    </ligand>
</feature>
<feature type="binding site" evidence="1">
    <location>
        <position position="180"/>
    </location>
    <ligand>
        <name>Zn(2+)</name>
        <dbReference type="ChEBI" id="CHEBI:29105"/>
        <label>2</label>
    </ligand>
</feature>
<feature type="binding site" evidence="1">
    <location>
        <position position="233"/>
    </location>
    <ligand>
        <name>Zn(2+)</name>
        <dbReference type="ChEBI" id="CHEBI:29105"/>
        <label>2</label>
    </ligand>
</feature>
<feature type="binding site" evidence="1">
    <location>
        <position position="279"/>
    </location>
    <ligand>
        <name>substrate</name>
    </ligand>
</feature>
<feature type="binding site" evidence="1">
    <location>
        <position position="306"/>
    </location>
    <ligand>
        <name>Zn(2+)</name>
        <dbReference type="ChEBI" id="CHEBI:29105"/>
        <label>1</label>
    </ligand>
</feature>
<feature type="binding site" evidence="1">
    <location>
        <position position="310"/>
    </location>
    <ligand>
        <name>substrate</name>
    </ligand>
</feature>
<keyword id="KW-0378">Hydrolase</keyword>
<keyword id="KW-0479">Metal-binding</keyword>
<keyword id="KW-0665">Pyrimidine biosynthesis</keyword>
<keyword id="KW-0862">Zinc</keyword>
<comment type="function">
    <text evidence="1">Catalyzes the reversible cyclization of carbamoyl aspartate to dihydroorotate.</text>
</comment>
<comment type="catalytic activity">
    <reaction evidence="1">
        <text>(S)-dihydroorotate + H2O = N-carbamoyl-L-aspartate + H(+)</text>
        <dbReference type="Rhea" id="RHEA:24296"/>
        <dbReference type="ChEBI" id="CHEBI:15377"/>
        <dbReference type="ChEBI" id="CHEBI:15378"/>
        <dbReference type="ChEBI" id="CHEBI:30864"/>
        <dbReference type="ChEBI" id="CHEBI:32814"/>
        <dbReference type="EC" id="3.5.2.3"/>
    </reaction>
</comment>
<comment type="cofactor">
    <cofactor evidence="1">
        <name>Zn(2+)</name>
        <dbReference type="ChEBI" id="CHEBI:29105"/>
    </cofactor>
    <text evidence="1">Binds 2 Zn(2+) ions per subunit.</text>
</comment>
<comment type="pathway">
    <text evidence="1">Pyrimidine metabolism; UMP biosynthesis via de novo pathway; (S)-dihydroorotate from bicarbonate: step 3/3.</text>
</comment>
<comment type="similarity">
    <text evidence="1">Belongs to the metallo-dependent hydrolases superfamily. DHOase family. Class I DHOase subfamily.</text>
</comment>
<protein>
    <recommendedName>
        <fullName evidence="1">Dihydroorotase</fullName>
        <shortName evidence="1">DHOase</shortName>
        <ecNumber evidence="1">3.5.2.3</ecNumber>
    </recommendedName>
</protein>
<name>PYRC_CALS8</name>
<dbReference type="EC" id="3.5.2.3" evidence="1"/>
<dbReference type="EMBL" id="CP000679">
    <property type="protein sequence ID" value="ABP67517.1"/>
    <property type="molecule type" value="Genomic_DNA"/>
</dbReference>
<dbReference type="RefSeq" id="WP_011917453.1">
    <property type="nucleotide sequence ID" value="NC_009437.1"/>
</dbReference>
<dbReference type="SMR" id="A4XKT2"/>
<dbReference type="STRING" id="351627.Csac_1932"/>
<dbReference type="KEGG" id="csc:Csac_1932"/>
<dbReference type="eggNOG" id="COG0044">
    <property type="taxonomic scope" value="Bacteria"/>
</dbReference>
<dbReference type="HOGENOM" id="CLU_015572_1_0_9"/>
<dbReference type="OrthoDB" id="9765462at2"/>
<dbReference type="UniPathway" id="UPA00070">
    <property type="reaction ID" value="UER00117"/>
</dbReference>
<dbReference type="Proteomes" id="UP000000256">
    <property type="component" value="Chromosome"/>
</dbReference>
<dbReference type="GO" id="GO:0005737">
    <property type="term" value="C:cytoplasm"/>
    <property type="evidence" value="ECO:0007669"/>
    <property type="project" value="TreeGrafter"/>
</dbReference>
<dbReference type="GO" id="GO:0004038">
    <property type="term" value="F:allantoinase activity"/>
    <property type="evidence" value="ECO:0007669"/>
    <property type="project" value="TreeGrafter"/>
</dbReference>
<dbReference type="GO" id="GO:0004151">
    <property type="term" value="F:dihydroorotase activity"/>
    <property type="evidence" value="ECO:0007669"/>
    <property type="project" value="UniProtKB-UniRule"/>
</dbReference>
<dbReference type="GO" id="GO:0008270">
    <property type="term" value="F:zinc ion binding"/>
    <property type="evidence" value="ECO:0007669"/>
    <property type="project" value="UniProtKB-UniRule"/>
</dbReference>
<dbReference type="GO" id="GO:0044205">
    <property type="term" value="P:'de novo' UMP biosynthetic process"/>
    <property type="evidence" value="ECO:0007669"/>
    <property type="project" value="UniProtKB-UniRule"/>
</dbReference>
<dbReference type="GO" id="GO:0006145">
    <property type="term" value="P:purine nucleobase catabolic process"/>
    <property type="evidence" value="ECO:0007669"/>
    <property type="project" value="TreeGrafter"/>
</dbReference>
<dbReference type="CDD" id="cd01317">
    <property type="entry name" value="DHOase_IIa"/>
    <property type="match status" value="1"/>
</dbReference>
<dbReference type="Gene3D" id="3.20.20.140">
    <property type="entry name" value="Metal-dependent hydrolases"/>
    <property type="match status" value="1"/>
</dbReference>
<dbReference type="Gene3D" id="2.30.40.10">
    <property type="entry name" value="Urease, subunit C, domain 1"/>
    <property type="match status" value="1"/>
</dbReference>
<dbReference type="HAMAP" id="MF_00220_B">
    <property type="entry name" value="PyrC_classI_B"/>
    <property type="match status" value="1"/>
</dbReference>
<dbReference type="InterPro" id="IPR006680">
    <property type="entry name" value="Amidohydro-rel"/>
</dbReference>
<dbReference type="InterPro" id="IPR004722">
    <property type="entry name" value="DHOase"/>
</dbReference>
<dbReference type="InterPro" id="IPR050138">
    <property type="entry name" value="DHOase/Allantoinase_Hydrolase"/>
</dbReference>
<dbReference type="InterPro" id="IPR002195">
    <property type="entry name" value="Dihydroorotase_CS"/>
</dbReference>
<dbReference type="InterPro" id="IPR011059">
    <property type="entry name" value="Metal-dep_hydrolase_composite"/>
</dbReference>
<dbReference type="InterPro" id="IPR032466">
    <property type="entry name" value="Metal_Hydrolase"/>
</dbReference>
<dbReference type="NCBIfam" id="TIGR00857">
    <property type="entry name" value="pyrC_multi"/>
    <property type="match status" value="1"/>
</dbReference>
<dbReference type="PANTHER" id="PTHR43668">
    <property type="entry name" value="ALLANTOINASE"/>
    <property type="match status" value="1"/>
</dbReference>
<dbReference type="PANTHER" id="PTHR43668:SF2">
    <property type="entry name" value="ALLANTOINASE"/>
    <property type="match status" value="1"/>
</dbReference>
<dbReference type="Pfam" id="PF01979">
    <property type="entry name" value="Amidohydro_1"/>
    <property type="match status" value="1"/>
</dbReference>
<dbReference type="SUPFAM" id="SSF51338">
    <property type="entry name" value="Composite domain of metallo-dependent hydrolases"/>
    <property type="match status" value="1"/>
</dbReference>
<dbReference type="SUPFAM" id="SSF51556">
    <property type="entry name" value="Metallo-dependent hydrolases"/>
    <property type="match status" value="1"/>
</dbReference>
<dbReference type="PROSITE" id="PS00483">
    <property type="entry name" value="DIHYDROOROTASE_2"/>
    <property type="match status" value="1"/>
</dbReference>